<feature type="chain" id="PRO_1000067368" description="Anhydro-N-acetylmuramic acid kinase">
    <location>
        <begin position="1"/>
        <end position="369"/>
    </location>
</feature>
<feature type="binding site" evidence="1">
    <location>
        <begin position="12"/>
        <end position="19"/>
    </location>
    <ligand>
        <name>ATP</name>
        <dbReference type="ChEBI" id="CHEBI:30616"/>
    </ligand>
</feature>
<accession>A1RMG0</accession>
<gene>
    <name evidence="1" type="primary">anmK</name>
    <name type="ordered locus">Sputw3181_3038</name>
</gene>
<comment type="function">
    <text evidence="1">Catalyzes the specific phosphorylation of 1,6-anhydro-N-acetylmuramic acid (anhMurNAc) with the simultaneous cleavage of the 1,6-anhydro ring, generating MurNAc-6-P. Is required for the utilization of anhMurNAc either imported from the medium or derived from its own cell wall murein, and thus plays a role in cell wall recycling.</text>
</comment>
<comment type="catalytic activity">
    <reaction evidence="1">
        <text>1,6-anhydro-N-acetyl-beta-muramate + ATP + H2O = N-acetyl-D-muramate 6-phosphate + ADP + H(+)</text>
        <dbReference type="Rhea" id="RHEA:24952"/>
        <dbReference type="ChEBI" id="CHEBI:15377"/>
        <dbReference type="ChEBI" id="CHEBI:15378"/>
        <dbReference type="ChEBI" id="CHEBI:30616"/>
        <dbReference type="ChEBI" id="CHEBI:58690"/>
        <dbReference type="ChEBI" id="CHEBI:58722"/>
        <dbReference type="ChEBI" id="CHEBI:456216"/>
        <dbReference type="EC" id="2.7.1.170"/>
    </reaction>
</comment>
<comment type="pathway">
    <text evidence="1">Amino-sugar metabolism; 1,6-anhydro-N-acetylmuramate degradation.</text>
</comment>
<comment type="pathway">
    <text evidence="1">Cell wall biogenesis; peptidoglycan recycling.</text>
</comment>
<comment type="similarity">
    <text evidence="1">Belongs to the anhydro-N-acetylmuramic acid kinase family.</text>
</comment>
<keyword id="KW-0067">ATP-binding</keyword>
<keyword id="KW-0119">Carbohydrate metabolism</keyword>
<keyword id="KW-0418">Kinase</keyword>
<keyword id="KW-0547">Nucleotide-binding</keyword>
<keyword id="KW-0808">Transferase</keyword>
<sequence>MKNAYYIGLMSGTSMDGVDAVLVDFSGPQPQLICSHTEAIPSHLLKGLQRLCLPGADEINRLGRLDRNVGQLFALAVNNLLAKCNIAKEDIIAIGSHGQTVRHMPNLEVGFTLQIGDPNTIATETGIDVIADFRRKDIALGGQGAPLVPAFHQQTFAEIGKKRIILNIGGIANVTYLPGTSEHVLGFDTGPGNTLIDAWIQHVKSEPFDKNGEWAASGKTNPDLLAQLLSHPYFSLAYPKSTGRELFNQAWLEQQLSPFNHLDEEDIQSTLLDMTCHSIARDVIKLSPEGELFVCGGGAFNTQLMQRLAALLPGYKLDTTSALGVDPKWAEGIAFAWLAMRNHLGLPANLPAVTGASREAVLGGRFSAK</sequence>
<evidence type="ECO:0000255" key="1">
    <source>
        <dbReference type="HAMAP-Rule" id="MF_01270"/>
    </source>
</evidence>
<dbReference type="EC" id="2.7.1.170" evidence="1"/>
<dbReference type="EMBL" id="CP000503">
    <property type="protein sequence ID" value="ABM25855.1"/>
    <property type="molecule type" value="Genomic_DNA"/>
</dbReference>
<dbReference type="RefSeq" id="WP_011790307.1">
    <property type="nucleotide sequence ID" value="NC_008750.1"/>
</dbReference>
<dbReference type="SMR" id="A1RMG0"/>
<dbReference type="KEGG" id="shw:Sputw3181_3038"/>
<dbReference type="HOGENOM" id="CLU_038782_0_0_6"/>
<dbReference type="UniPathway" id="UPA00343"/>
<dbReference type="UniPathway" id="UPA00544"/>
<dbReference type="Proteomes" id="UP000002597">
    <property type="component" value="Chromosome"/>
</dbReference>
<dbReference type="GO" id="GO:0005524">
    <property type="term" value="F:ATP binding"/>
    <property type="evidence" value="ECO:0007669"/>
    <property type="project" value="UniProtKB-UniRule"/>
</dbReference>
<dbReference type="GO" id="GO:0016301">
    <property type="term" value="F:kinase activity"/>
    <property type="evidence" value="ECO:0007669"/>
    <property type="project" value="UniProtKB-KW"/>
</dbReference>
<dbReference type="GO" id="GO:0016773">
    <property type="term" value="F:phosphotransferase activity, alcohol group as acceptor"/>
    <property type="evidence" value="ECO:0007669"/>
    <property type="project" value="UniProtKB-UniRule"/>
</dbReference>
<dbReference type="GO" id="GO:0097175">
    <property type="term" value="P:1,6-anhydro-N-acetyl-beta-muramic acid catabolic process"/>
    <property type="evidence" value="ECO:0007669"/>
    <property type="project" value="UniProtKB-UniRule"/>
</dbReference>
<dbReference type="GO" id="GO:0006040">
    <property type="term" value="P:amino sugar metabolic process"/>
    <property type="evidence" value="ECO:0007669"/>
    <property type="project" value="InterPro"/>
</dbReference>
<dbReference type="GO" id="GO:0009254">
    <property type="term" value="P:peptidoglycan turnover"/>
    <property type="evidence" value="ECO:0007669"/>
    <property type="project" value="UniProtKB-UniRule"/>
</dbReference>
<dbReference type="CDD" id="cd24050">
    <property type="entry name" value="ASKHA_NBD_ANMK"/>
    <property type="match status" value="1"/>
</dbReference>
<dbReference type="Gene3D" id="3.30.420.40">
    <property type="match status" value="2"/>
</dbReference>
<dbReference type="HAMAP" id="MF_01270">
    <property type="entry name" value="AnhMurNAc_kinase"/>
    <property type="match status" value="1"/>
</dbReference>
<dbReference type="InterPro" id="IPR005338">
    <property type="entry name" value="Anhydro_N_Ac-Mur_kinase"/>
</dbReference>
<dbReference type="InterPro" id="IPR043129">
    <property type="entry name" value="ATPase_NBD"/>
</dbReference>
<dbReference type="NCBIfam" id="NF007139">
    <property type="entry name" value="PRK09585.1-3"/>
    <property type="match status" value="1"/>
</dbReference>
<dbReference type="NCBIfam" id="NF007148">
    <property type="entry name" value="PRK09585.3-2"/>
    <property type="match status" value="1"/>
</dbReference>
<dbReference type="PANTHER" id="PTHR30605">
    <property type="entry name" value="ANHYDRO-N-ACETYLMURAMIC ACID KINASE"/>
    <property type="match status" value="1"/>
</dbReference>
<dbReference type="PANTHER" id="PTHR30605:SF0">
    <property type="entry name" value="ANHYDRO-N-ACETYLMURAMIC ACID KINASE"/>
    <property type="match status" value="1"/>
</dbReference>
<dbReference type="Pfam" id="PF03702">
    <property type="entry name" value="AnmK"/>
    <property type="match status" value="1"/>
</dbReference>
<dbReference type="SUPFAM" id="SSF53067">
    <property type="entry name" value="Actin-like ATPase domain"/>
    <property type="match status" value="1"/>
</dbReference>
<organism>
    <name type="scientific">Shewanella sp. (strain W3-18-1)</name>
    <dbReference type="NCBI Taxonomy" id="351745"/>
    <lineage>
        <taxon>Bacteria</taxon>
        <taxon>Pseudomonadati</taxon>
        <taxon>Pseudomonadota</taxon>
        <taxon>Gammaproteobacteria</taxon>
        <taxon>Alteromonadales</taxon>
        <taxon>Shewanellaceae</taxon>
        <taxon>Shewanella</taxon>
    </lineage>
</organism>
<name>ANMK_SHESW</name>
<proteinExistence type="inferred from homology"/>
<reference key="1">
    <citation type="submission" date="2006-12" db="EMBL/GenBank/DDBJ databases">
        <title>Complete sequence of Shewanella sp. W3-18-1.</title>
        <authorList>
            <consortium name="US DOE Joint Genome Institute"/>
            <person name="Copeland A."/>
            <person name="Lucas S."/>
            <person name="Lapidus A."/>
            <person name="Barry K."/>
            <person name="Detter J.C."/>
            <person name="Glavina del Rio T."/>
            <person name="Hammon N."/>
            <person name="Israni S."/>
            <person name="Dalin E."/>
            <person name="Tice H."/>
            <person name="Pitluck S."/>
            <person name="Chain P."/>
            <person name="Malfatti S."/>
            <person name="Shin M."/>
            <person name="Vergez L."/>
            <person name="Schmutz J."/>
            <person name="Larimer F."/>
            <person name="Land M."/>
            <person name="Hauser L."/>
            <person name="Kyrpides N."/>
            <person name="Lykidis A."/>
            <person name="Tiedje J."/>
            <person name="Richardson P."/>
        </authorList>
    </citation>
    <scope>NUCLEOTIDE SEQUENCE [LARGE SCALE GENOMIC DNA]</scope>
    <source>
        <strain>W3-18-1</strain>
    </source>
</reference>
<protein>
    <recommendedName>
        <fullName evidence="1">Anhydro-N-acetylmuramic acid kinase</fullName>
        <ecNumber evidence="1">2.7.1.170</ecNumber>
    </recommendedName>
    <alternativeName>
        <fullName evidence="1">AnhMurNAc kinase</fullName>
    </alternativeName>
</protein>